<accession>A1AII6</accession>
<name>ACEK_ECOK1</name>
<feature type="chain" id="PRO_0000288287" description="Isocitrate dehydrogenase kinase/phosphatase">
    <location>
        <begin position="1"/>
        <end position="574"/>
    </location>
</feature>
<feature type="active site" evidence="1">
    <location>
        <position position="371"/>
    </location>
</feature>
<feature type="binding site" evidence="1">
    <location>
        <begin position="315"/>
        <end position="321"/>
    </location>
    <ligand>
        <name>ATP</name>
        <dbReference type="ChEBI" id="CHEBI:30616"/>
    </ligand>
</feature>
<feature type="binding site" evidence="1">
    <location>
        <position position="336"/>
    </location>
    <ligand>
        <name>ATP</name>
        <dbReference type="ChEBI" id="CHEBI:30616"/>
    </ligand>
</feature>
<proteinExistence type="inferred from homology"/>
<protein>
    <recommendedName>
        <fullName evidence="1">Isocitrate dehydrogenase kinase/phosphatase</fullName>
        <shortName evidence="1">IDH kinase/phosphatase</shortName>
        <shortName evidence="1">IDHK/P</shortName>
        <ecNumber evidence="1">2.7.11.5</ecNumber>
        <ecNumber evidence="1">3.1.3.-</ecNumber>
    </recommendedName>
</protein>
<keyword id="KW-0067">ATP-binding</keyword>
<keyword id="KW-0963">Cytoplasm</keyword>
<keyword id="KW-0329">Glyoxylate bypass</keyword>
<keyword id="KW-0378">Hydrolase</keyword>
<keyword id="KW-0418">Kinase</keyword>
<keyword id="KW-0547">Nucleotide-binding</keyword>
<keyword id="KW-0904">Protein phosphatase</keyword>
<keyword id="KW-1185">Reference proteome</keyword>
<keyword id="KW-0723">Serine/threonine-protein kinase</keyword>
<keyword id="KW-0808">Transferase</keyword>
<keyword id="KW-0816">Tricarboxylic acid cycle</keyword>
<sequence>MPRGLELLIAQTILQGFDAQYGRFLEVTSGAQQRFEQADWHAVQQAMKNRIHLYDHHVGLVVEQLRCITNGQSTDAAFLLRVKEHYTRLLPDYPRFEIAESFFNSVYCRLFDHRSLTPERLFIFSSQPERRFRTIPRPLAKDFHPDHGWESLLMRVISDLPLRLRWQNKSRDIHYIVRHLTETLGTDNLAESHLQVANELFYRNKAAWLVGKLITPSGTLPFLLPIHQTDDGELFIDTCLTTTAEASIVFGFARSYFMVYAPLPAALVEWLREILPGKTTAELYMAIGCQKHAKTESYREYLVYLQGCNEQFIEAPGIRGMVMLVFTLPGFDRVFKVIKDRFAPQKEMSAAHVRACYQLVKEHDRVGRMADTQEFENFVLEKRHISPALMELLLQEAAEKITDLGEQIVIRHLYIERRMVPLNIWLEQVEGQQLRDAIEEYGNAIRQLAAANIFPGDMLFKNFGVTRHGRVVFYDYDEICYMTEVNFRDIPLPRYPEDELASEPWYSVSPGDVFPEEFRHWLCADPRIGPLFEEMHADLFRADYWRALQNRIREGHVEDVYAYRRRQRFSVRFV</sequence>
<dbReference type="EC" id="2.7.11.5" evidence="1"/>
<dbReference type="EC" id="3.1.3.-" evidence="1"/>
<dbReference type="EMBL" id="CP000468">
    <property type="protein sequence ID" value="ABJ03476.1"/>
    <property type="molecule type" value="Genomic_DNA"/>
</dbReference>
<dbReference type="RefSeq" id="WP_001137237.1">
    <property type="nucleotide sequence ID" value="NZ_CADILS010000093.1"/>
</dbReference>
<dbReference type="SMR" id="A1AII6"/>
<dbReference type="KEGG" id="ecv:APECO1_2460"/>
<dbReference type="HOGENOM" id="CLU_033804_1_1_6"/>
<dbReference type="Proteomes" id="UP000008216">
    <property type="component" value="Chromosome"/>
</dbReference>
<dbReference type="GO" id="GO:0005737">
    <property type="term" value="C:cytoplasm"/>
    <property type="evidence" value="ECO:0007669"/>
    <property type="project" value="UniProtKB-SubCell"/>
</dbReference>
<dbReference type="GO" id="GO:0008772">
    <property type="term" value="F:[isocitrate dehydrogenase (NADP+)] kinase activity"/>
    <property type="evidence" value="ECO:0007669"/>
    <property type="project" value="UniProtKB-UniRule"/>
</dbReference>
<dbReference type="GO" id="GO:0016208">
    <property type="term" value="F:AMP binding"/>
    <property type="evidence" value="ECO:0007669"/>
    <property type="project" value="TreeGrafter"/>
</dbReference>
<dbReference type="GO" id="GO:0005524">
    <property type="term" value="F:ATP binding"/>
    <property type="evidence" value="ECO:0007669"/>
    <property type="project" value="UniProtKB-UniRule"/>
</dbReference>
<dbReference type="GO" id="GO:0004721">
    <property type="term" value="F:phosphoprotein phosphatase activity"/>
    <property type="evidence" value="ECO:0007669"/>
    <property type="project" value="UniProtKB-KW"/>
</dbReference>
<dbReference type="GO" id="GO:0004674">
    <property type="term" value="F:protein serine/threonine kinase activity"/>
    <property type="evidence" value="ECO:0007669"/>
    <property type="project" value="UniProtKB-KW"/>
</dbReference>
<dbReference type="GO" id="GO:0006006">
    <property type="term" value="P:glucose metabolic process"/>
    <property type="evidence" value="ECO:0007669"/>
    <property type="project" value="InterPro"/>
</dbReference>
<dbReference type="GO" id="GO:0006097">
    <property type="term" value="P:glyoxylate cycle"/>
    <property type="evidence" value="ECO:0007669"/>
    <property type="project" value="UniProtKB-UniRule"/>
</dbReference>
<dbReference type="GO" id="GO:0006099">
    <property type="term" value="P:tricarboxylic acid cycle"/>
    <property type="evidence" value="ECO:0007669"/>
    <property type="project" value="UniProtKB-UniRule"/>
</dbReference>
<dbReference type="HAMAP" id="MF_00747">
    <property type="entry name" value="AceK"/>
    <property type="match status" value="1"/>
</dbReference>
<dbReference type="InterPro" id="IPR046855">
    <property type="entry name" value="AceK_kinase"/>
</dbReference>
<dbReference type="InterPro" id="IPR046854">
    <property type="entry name" value="AceK_regulatory"/>
</dbReference>
<dbReference type="InterPro" id="IPR010452">
    <property type="entry name" value="Isocitrate_DH_AceK"/>
</dbReference>
<dbReference type="NCBIfam" id="NF002804">
    <property type="entry name" value="PRK02946.1"/>
    <property type="match status" value="1"/>
</dbReference>
<dbReference type="PANTHER" id="PTHR39559">
    <property type="match status" value="1"/>
</dbReference>
<dbReference type="PANTHER" id="PTHR39559:SF1">
    <property type="entry name" value="ISOCITRATE DEHYDROGENASE KINASE_PHOSPHATASE"/>
    <property type="match status" value="1"/>
</dbReference>
<dbReference type="Pfam" id="PF06315">
    <property type="entry name" value="AceK_kinase"/>
    <property type="match status" value="1"/>
</dbReference>
<dbReference type="Pfam" id="PF20423">
    <property type="entry name" value="AceK_regulatory"/>
    <property type="match status" value="1"/>
</dbReference>
<dbReference type="PIRSF" id="PIRSF000719">
    <property type="entry name" value="AceK"/>
    <property type="match status" value="1"/>
</dbReference>
<gene>
    <name evidence="1" type="primary">aceK</name>
    <name type="ordered locus">Ecok1_39820</name>
    <name type="ORF">APECO1_2460</name>
</gene>
<evidence type="ECO:0000255" key="1">
    <source>
        <dbReference type="HAMAP-Rule" id="MF_00747"/>
    </source>
</evidence>
<reference key="1">
    <citation type="journal article" date="2007" name="J. Bacteriol.">
        <title>The genome sequence of avian pathogenic Escherichia coli strain O1:K1:H7 shares strong similarities with human extraintestinal pathogenic E. coli genomes.</title>
        <authorList>
            <person name="Johnson T.J."/>
            <person name="Kariyawasam S."/>
            <person name="Wannemuehler Y."/>
            <person name="Mangiamele P."/>
            <person name="Johnson S.J."/>
            <person name="Doetkott C."/>
            <person name="Skyberg J.A."/>
            <person name="Lynne A.M."/>
            <person name="Johnson J.R."/>
            <person name="Nolan L.K."/>
        </authorList>
    </citation>
    <scope>NUCLEOTIDE SEQUENCE [LARGE SCALE GENOMIC DNA]</scope>
</reference>
<organism>
    <name type="scientific">Escherichia coli O1:K1 / APEC</name>
    <dbReference type="NCBI Taxonomy" id="405955"/>
    <lineage>
        <taxon>Bacteria</taxon>
        <taxon>Pseudomonadati</taxon>
        <taxon>Pseudomonadota</taxon>
        <taxon>Gammaproteobacteria</taxon>
        <taxon>Enterobacterales</taxon>
        <taxon>Enterobacteriaceae</taxon>
        <taxon>Escherichia</taxon>
    </lineage>
</organism>
<comment type="function">
    <text evidence="1">Bifunctional enzyme which can phosphorylate or dephosphorylate isocitrate dehydrogenase (IDH) on a specific serine residue. This is a regulatory mechanism which enables bacteria to bypass the Krebs cycle via the glyoxylate shunt in response to the source of carbon. When bacteria are grown on glucose, IDH is fully active and unphosphorylated, but when grown on acetate or ethanol, the activity of IDH declines drastically concomitant with its phosphorylation.</text>
</comment>
<comment type="catalytic activity">
    <reaction evidence="1">
        <text>L-seryl-[isocitrate dehydrogenase] + ATP = O-phospho-L-seryl-[isocitrate dehydrogenase] + ADP + H(+)</text>
        <dbReference type="Rhea" id="RHEA:43540"/>
        <dbReference type="Rhea" id="RHEA-COMP:10605"/>
        <dbReference type="Rhea" id="RHEA-COMP:10606"/>
        <dbReference type="ChEBI" id="CHEBI:15378"/>
        <dbReference type="ChEBI" id="CHEBI:29999"/>
        <dbReference type="ChEBI" id="CHEBI:30616"/>
        <dbReference type="ChEBI" id="CHEBI:83421"/>
        <dbReference type="ChEBI" id="CHEBI:456216"/>
        <dbReference type="EC" id="2.7.11.5"/>
    </reaction>
</comment>
<comment type="subcellular location">
    <subcellularLocation>
        <location evidence="1">Cytoplasm</location>
    </subcellularLocation>
</comment>
<comment type="similarity">
    <text evidence="1">Belongs to the AceK family.</text>
</comment>